<accession>Q48QW4</accession>
<dbReference type="EMBL" id="CP000056">
    <property type="protein sequence ID" value="AAX72896.1"/>
    <property type="molecule type" value="Genomic_DNA"/>
</dbReference>
<dbReference type="RefSeq" id="WP_011285268.1">
    <property type="nucleotide sequence ID" value="NC_007296.2"/>
</dbReference>
<dbReference type="SMR" id="Q48QW4"/>
<dbReference type="KEGG" id="spb:M28_Spy1786"/>
<dbReference type="HOGENOM" id="CLU_087936_1_0_9"/>
<dbReference type="GO" id="GO:0005737">
    <property type="term" value="C:cytoplasm"/>
    <property type="evidence" value="ECO:0007669"/>
    <property type="project" value="UniProtKB-SubCell"/>
</dbReference>
<dbReference type="GO" id="GO:0009379">
    <property type="term" value="C:Holliday junction helicase complex"/>
    <property type="evidence" value="ECO:0007669"/>
    <property type="project" value="InterPro"/>
</dbReference>
<dbReference type="GO" id="GO:0048476">
    <property type="term" value="C:Holliday junction resolvase complex"/>
    <property type="evidence" value="ECO:0007669"/>
    <property type="project" value="UniProtKB-UniRule"/>
</dbReference>
<dbReference type="GO" id="GO:0005524">
    <property type="term" value="F:ATP binding"/>
    <property type="evidence" value="ECO:0007669"/>
    <property type="project" value="InterPro"/>
</dbReference>
<dbReference type="GO" id="GO:0000400">
    <property type="term" value="F:four-way junction DNA binding"/>
    <property type="evidence" value="ECO:0007669"/>
    <property type="project" value="UniProtKB-UniRule"/>
</dbReference>
<dbReference type="GO" id="GO:0009378">
    <property type="term" value="F:four-way junction helicase activity"/>
    <property type="evidence" value="ECO:0007669"/>
    <property type="project" value="InterPro"/>
</dbReference>
<dbReference type="GO" id="GO:0006310">
    <property type="term" value="P:DNA recombination"/>
    <property type="evidence" value="ECO:0007669"/>
    <property type="project" value="UniProtKB-UniRule"/>
</dbReference>
<dbReference type="GO" id="GO:0006281">
    <property type="term" value="P:DNA repair"/>
    <property type="evidence" value="ECO:0007669"/>
    <property type="project" value="UniProtKB-UniRule"/>
</dbReference>
<dbReference type="CDD" id="cd14332">
    <property type="entry name" value="UBA_RuvA_C"/>
    <property type="match status" value="1"/>
</dbReference>
<dbReference type="Gene3D" id="1.10.150.20">
    <property type="entry name" value="5' to 3' exonuclease, C-terminal subdomain"/>
    <property type="match status" value="1"/>
</dbReference>
<dbReference type="Gene3D" id="1.10.8.10">
    <property type="entry name" value="DNA helicase RuvA subunit, C-terminal domain"/>
    <property type="match status" value="1"/>
</dbReference>
<dbReference type="Gene3D" id="2.40.50.140">
    <property type="entry name" value="Nucleic acid-binding proteins"/>
    <property type="match status" value="1"/>
</dbReference>
<dbReference type="HAMAP" id="MF_00031">
    <property type="entry name" value="DNA_HJ_migration_RuvA"/>
    <property type="match status" value="1"/>
</dbReference>
<dbReference type="InterPro" id="IPR013849">
    <property type="entry name" value="DNA_helicase_Holl-junc_RuvA_I"/>
</dbReference>
<dbReference type="InterPro" id="IPR003583">
    <property type="entry name" value="Hlx-hairpin-Hlx_DNA-bd_motif"/>
</dbReference>
<dbReference type="InterPro" id="IPR012340">
    <property type="entry name" value="NA-bd_OB-fold"/>
</dbReference>
<dbReference type="InterPro" id="IPR000085">
    <property type="entry name" value="RuvA"/>
</dbReference>
<dbReference type="InterPro" id="IPR010994">
    <property type="entry name" value="RuvA_2-like"/>
</dbReference>
<dbReference type="InterPro" id="IPR011114">
    <property type="entry name" value="RuvA_C"/>
</dbReference>
<dbReference type="InterPro" id="IPR036267">
    <property type="entry name" value="RuvA_C_sf"/>
</dbReference>
<dbReference type="NCBIfam" id="TIGR00084">
    <property type="entry name" value="ruvA"/>
    <property type="match status" value="1"/>
</dbReference>
<dbReference type="Pfam" id="PF14520">
    <property type="entry name" value="HHH_5"/>
    <property type="match status" value="1"/>
</dbReference>
<dbReference type="Pfam" id="PF07499">
    <property type="entry name" value="RuvA_C"/>
    <property type="match status" value="1"/>
</dbReference>
<dbReference type="Pfam" id="PF01330">
    <property type="entry name" value="RuvA_N"/>
    <property type="match status" value="1"/>
</dbReference>
<dbReference type="SMART" id="SM00278">
    <property type="entry name" value="HhH1"/>
    <property type="match status" value="2"/>
</dbReference>
<dbReference type="SUPFAM" id="SSF46929">
    <property type="entry name" value="DNA helicase RuvA subunit, C-terminal domain"/>
    <property type="match status" value="1"/>
</dbReference>
<dbReference type="SUPFAM" id="SSF50249">
    <property type="entry name" value="Nucleic acid-binding proteins"/>
    <property type="match status" value="1"/>
</dbReference>
<dbReference type="SUPFAM" id="SSF47781">
    <property type="entry name" value="RuvA domain 2-like"/>
    <property type="match status" value="1"/>
</dbReference>
<name>RUVA_STRPM</name>
<proteinExistence type="inferred from homology"/>
<evidence type="ECO:0000255" key="1">
    <source>
        <dbReference type="HAMAP-Rule" id="MF_00031"/>
    </source>
</evidence>
<sequence length="198" mass="21811">MYDYIKGQLTKITAKYIVVETNGLGYIINVANPYSFTDSVNQLVTIYLHQVIREDAHLLFGFHTEDEKDVFLKLISVSGIGPTTALAIVAVDDNEGLVNAIDNSDIKYLMKFPKIGKKTAQQMVLDLAGKFVEAPQETGNTKARSNKAGNTQLDEAIEALLALGYKAAELKKIRAFFEGTSETAEQYIKSALKLLMKG</sequence>
<organism>
    <name type="scientific">Streptococcus pyogenes serotype M28 (strain MGAS6180)</name>
    <dbReference type="NCBI Taxonomy" id="319701"/>
    <lineage>
        <taxon>Bacteria</taxon>
        <taxon>Bacillati</taxon>
        <taxon>Bacillota</taxon>
        <taxon>Bacilli</taxon>
        <taxon>Lactobacillales</taxon>
        <taxon>Streptococcaceae</taxon>
        <taxon>Streptococcus</taxon>
    </lineage>
</organism>
<gene>
    <name evidence="1" type="primary">ruvA</name>
    <name type="ordered locus">M28_Spy1786</name>
</gene>
<protein>
    <recommendedName>
        <fullName evidence="1">Holliday junction branch migration complex subunit RuvA</fullName>
    </recommendedName>
</protein>
<reference key="1">
    <citation type="journal article" date="2005" name="J. Infect. Dis.">
        <title>Genome sequence of a serotype M28 strain of group A Streptococcus: potential new insights into puerperal sepsis and bacterial disease specificity.</title>
        <authorList>
            <person name="Green N.M."/>
            <person name="Zhang S."/>
            <person name="Porcella S.F."/>
            <person name="Nagiec M.J."/>
            <person name="Barbian K.D."/>
            <person name="Beres S.B."/>
            <person name="Lefebvre R.B."/>
            <person name="Musser J.M."/>
        </authorList>
    </citation>
    <scope>NUCLEOTIDE SEQUENCE [LARGE SCALE GENOMIC DNA]</scope>
    <source>
        <strain>MGAS6180</strain>
    </source>
</reference>
<feature type="chain" id="PRO_0000224913" description="Holliday junction branch migration complex subunit RuvA">
    <location>
        <begin position="1"/>
        <end position="198"/>
    </location>
</feature>
<feature type="region of interest" description="Domain I" evidence="1">
    <location>
        <begin position="1"/>
        <end position="63"/>
    </location>
</feature>
<feature type="region of interest" description="Domain II" evidence="1">
    <location>
        <begin position="64"/>
        <end position="142"/>
    </location>
</feature>
<feature type="region of interest" description="Flexible linker" evidence="1">
    <location>
        <begin position="143"/>
        <end position="147"/>
    </location>
</feature>
<feature type="region of interest" description="Domain III" evidence="1">
    <location>
        <begin position="148"/>
        <end position="198"/>
    </location>
</feature>
<comment type="function">
    <text evidence="1">The RuvA-RuvB-RuvC complex processes Holliday junction (HJ) DNA during genetic recombination and DNA repair, while the RuvA-RuvB complex plays an important role in the rescue of blocked DNA replication forks via replication fork reversal (RFR). RuvA specifically binds to HJ cruciform DNA, conferring on it an open structure. The RuvB hexamer acts as an ATP-dependent pump, pulling dsDNA into and through the RuvAB complex. HJ branch migration allows RuvC to scan DNA until it finds its consensus sequence, where it cleaves and resolves the cruciform DNA.</text>
</comment>
<comment type="subunit">
    <text evidence="1">Homotetramer. Forms an RuvA(8)-RuvB(12)-Holliday junction (HJ) complex. HJ DNA is sandwiched between 2 RuvA tetramers; dsDNA enters through RuvA and exits via RuvB. An RuvB hexamer assembles on each DNA strand where it exits the tetramer. Each RuvB hexamer is contacted by two RuvA subunits (via domain III) on 2 adjacent RuvB subunits; this complex drives branch migration. In the full resolvosome a probable DNA-RuvA(4)-RuvB(12)-RuvC(2) complex forms which resolves the HJ.</text>
</comment>
<comment type="subcellular location">
    <subcellularLocation>
        <location evidence="1">Cytoplasm</location>
    </subcellularLocation>
</comment>
<comment type="domain">
    <text evidence="1">Has three domains with a flexible linker between the domains II and III and assumes an 'L' shape. Domain III is highly mobile and contacts RuvB.</text>
</comment>
<comment type="similarity">
    <text evidence="1">Belongs to the RuvA family.</text>
</comment>
<keyword id="KW-0963">Cytoplasm</keyword>
<keyword id="KW-0227">DNA damage</keyword>
<keyword id="KW-0233">DNA recombination</keyword>
<keyword id="KW-0234">DNA repair</keyword>
<keyword id="KW-0238">DNA-binding</keyword>